<accession>B1Y502</accession>
<dbReference type="EC" id="2.8.1.6" evidence="1"/>
<dbReference type="EMBL" id="CP001013">
    <property type="protein sequence ID" value="ACB35898.1"/>
    <property type="molecule type" value="Genomic_DNA"/>
</dbReference>
<dbReference type="RefSeq" id="WP_012348645.1">
    <property type="nucleotide sequence ID" value="NC_010524.1"/>
</dbReference>
<dbReference type="SMR" id="B1Y502"/>
<dbReference type="STRING" id="395495.Lcho_3644"/>
<dbReference type="KEGG" id="lch:Lcho_3644"/>
<dbReference type="eggNOG" id="COG0502">
    <property type="taxonomic scope" value="Bacteria"/>
</dbReference>
<dbReference type="HOGENOM" id="CLU_033172_1_2_4"/>
<dbReference type="OrthoDB" id="9786826at2"/>
<dbReference type="UniPathway" id="UPA00078">
    <property type="reaction ID" value="UER00162"/>
</dbReference>
<dbReference type="Proteomes" id="UP000001693">
    <property type="component" value="Chromosome"/>
</dbReference>
<dbReference type="GO" id="GO:0051537">
    <property type="term" value="F:2 iron, 2 sulfur cluster binding"/>
    <property type="evidence" value="ECO:0007669"/>
    <property type="project" value="UniProtKB-KW"/>
</dbReference>
<dbReference type="GO" id="GO:0051539">
    <property type="term" value="F:4 iron, 4 sulfur cluster binding"/>
    <property type="evidence" value="ECO:0007669"/>
    <property type="project" value="UniProtKB-KW"/>
</dbReference>
<dbReference type="GO" id="GO:0004076">
    <property type="term" value="F:biotin synthase activity"/>
    <property type="evidence" value="ECO:0007669"/>
    <property type="project" value="UniProtKB-UniRule"/>
</dbReference>
<dbReference type="GO" id="GO:0005506">
    <property type="term" value="F:iron ion binding"/>
    <property type="evidence" value="ECO:0007669"/>
    <property type="project" value="UniProtKB-UniRule"/>
</dbReference>
<dbReference type="GO" id="GO:0009102">
    <property type="term" value="P:biotin biosynthetic process"/>
    <property type="evidence" value="ECO:0007669"/>
    <property type="project" value="UniProtKB-UniRule"/>
</dbReference>
<dbReference type="CDD" id="cd01335">
    <property type="entry name" value="Radical_SAM"/>
    <property type="match status" value="1"/>
</dbReference>
<dbReference type="FunFam" id="3.20.20.70:FF:000011">
    <property type="entry name" value="Biotin synthase"/>
    <property type="match status" value="1"/>
</dbReference>
<dbReference type="Gene3D" id="3.20.20.70">
    <property type="entry name" value="Aldolase class I"/>
    <property type="match status" value="1"/>
</dbReference>
<dbReference type="HAMAP" id="MF_01694">
    <property type="entry name" value="BioB"/>
    <property type="match status" value="1"/>
</dbReference>
<dbReference type="InterPro" id="IPR013785">
    <property type="entry name" value="Aldolase_TIM"/>
</dbReference>
<dbReference type="InterPro" id="IPR010722">
    <property type="entry name" value="BATS_dom"/>
</dbReference>
<dbReference type="InterPro" id="IPR002684">
    <property type="entry name" value="Biotin_synth/BioAB"/>
</dbReference>
<dbReference type="InterPro" id="IPR024177">
    <property type="entry name" value="Biotin_synthase"/>
</dbReference>
<dbReference type="InterPro" id="IPR006638">
    <property type="entry name" value="Elp3/MiaA/NifB-like_rSAM"/>
</dbReference>
<dbReference type="InterPro" id="IPR007197">
    <property type="entry name" value="rSAM"/>
</dbReference>
<dbReference type="NCBIfam" id="TIGR00433">
    <property type="entry name" value="bioB"/>
    <property type="match status" value="1"/>
</dbReference>
<dbReference type="PANTHER" id="PTHR22976">
    <property type="entry name" value="BIOTIN SYNTHASE"/>
    <property type="match status" value="1"/>
</dbReference>
<dbReference type="PANTHER" id="PTHR22976:SF2">
    <property type="entry name" value="BIOTIN SYNTHASE, MITOCHONDRIAL"/>
    <property type="match status" value="1"/>
</dbReference>
<dbReference type="Pfam" id="PF06968">
    <property type="entry name" value="BATS"/>
    <property type="match status" value="1"/>
</dbReference>
<dbReference type="Pfam" id="PF04055">
    <property type="entry name" value="Radical_SAM"/>
    <property type="match status" value="1"/>
</dbReference>
<dbReference type="PIRSF" id="PIRSF001619">
    <property type="entry name" value="Biotin_synth"/>
    <property type="match status" value="1"/>
</dbReference>
<dbReference type="SFLD" id="SFLDF00272">
    <property type="entry name" value="biotin_synthase"/>
    <property type="match status" value="1"/>
</dbReference>
<dbReference type="SFLD" id="SFLDS00029">
    <property type="entry name" value="Radical_SAM"/>
    <property type="match status" value="1"/>
</dbReference>
<dbReference type="SMART" id="SM00876">
    <property type="entry name" value="BATS"/>
    <property type="match status" value="1"/>
</dbReference>
<dbReference type="SMART" id="SM00729">
    <property type="entry name" value="Elp3"/>
    <property type="match status" value="1"/>
</dbReference>
<dbReference type="SUPFAM" id="SSF102114">
    <property type="entry name" value="Radical SAM enzymes"/>
    <property type="match status" value="1"/>
</dbReference>
<dbReference type="PROSITE" id="PS51918">
    <property type="entry name" value="RADICAL_SAM"/>
    <property type="match status" value="1"/>
</dbReference>
<protein>
    <recommendedName>
        <fullName evidence="1">Biotin synthase</fullName>
        <ecNumber evidence="1">2.8.1.6</ecNumber>
    </recommendedName>
</protein>
<keyword id="KW-0001">2Fe-2S</keyword>
<keyword id="KW-0004">4Fe-4S</keyword>
<keyword id="KW-0093">Biotin biosynthesis</keyword>
<keyword id="KW-0408">Iron</keyword>
<keyword id="KW-0411">Iron-sulfur</keyword>
<keyword id="KW-0479">Metal-binding</keyword>
<keyword id="KW-1185">Reference proteome</keyword>
<keyword id="KW-0949">S-adenosyl-L-methionine</keyword>
<keyword id="KW-0808">Transferase</keyword>
<feature type="chain" id="PRO_0000381446" description="Biotin synthase">
    <location>
        <begin position="1"/>
        <end position="345"/>
    </location>
</feature>
<feature type="domain" description="Radical SAM core" evidence="2">
    <location>
        <begin position="59"/>
        <end position="286"/>
    </location>
</feature>
<feature type="binding site" evidence="1">
    <location>
        <position position="74"/>
    </location>
    <ligand>
        <name>[4Fe-4S] cluster</name>
        <dbReference type="ChEBI" id="CHEBI:49883"/>
        <note>4Fe-4S-S-AdoMet</note>
    </ligand>
</feature>
<feature type="binding site" evidence="1">
    <location>
        <position position="78"/>
    </location>
    <ligand>
        <name>[4Fe-4S] cluster</name>
        <dbReference type="ChEBI" id="CHEBI:49883"/>
        <note>4Fe-4S-S-AdoMet</note>
    </ligand>
</feature>
<feature type="binding site" evidence="1">
    <location>
        <position position="81"/>
    </location>
    <ligand>
        <name>[4Fe-4S] cluster</name>
        <dbReference type="ChEBI" id="CHEBI:49883"/>
        <note>4Fe-4S-S-AdoMet</note>
    </ligand>
</feature>
<feature type="binding site" evidence="1">
    <location>
        <position position="118"/>
    </location>
    <ligand>
        <name>[2Fe-2S] cluster</name>
        <dbReference type="ChEBI" id="CHEBI:190135"/>
    </ligand>
</feature>
<feature type="binding site" evidence="1">
    <location>
        <position position="149"/>
    </location>
    <ligand>
        <name>[2Fe-2S] cluster</name>
        <dbReference type="ChEBI" id="CHEBI:190135"/>
    </ligand>
</feature>
<feature type="binding site" evidence="1">
    <location>
        <position position="209"/>
    </location>
    <ligand>
        <name>[2Fe-2S] cluster</name>
        <dbReference type="ChEBI" id="CHEBI:190135"/>
    </ligand>
</feature>
<feature type="binding site" evidence="1">
    <location>
        <position position="281"/>
    </location>
    <ligand>
        <name>[2Fe-2S] cluster</name>
        <dbReference type="ChEBI" id="CHEBI:190135"/>
    </ligand>
</feature>
<sequence>MTTATISLSTLQASRPSVAARADAAARWRVADVEALYALPFMDLLFQAQQVHRAHFDANEVQLSTLLSIKTGGCAEDCGYCPQSAHFDTAVEASKLMPIDEVLDAANAAKAQGATRFCMGAAWRSPKERDMERVTEMVREVRALGLETCMTLGMLDGEQARELKDAGLDYYNHNLDSAPDFYGQVISTRTYQDRLDTLGNVRDAGINVCCGGIVGMGESRTQRAGLIAQLANLSPYPESVPINNLVPVPGTPLADAEPIDPFEFVRTIAVARITMPTTMVRLSAGREQMDEALQALCFAAGANSIFYGDKLLTTSNPQAARDRALFERLGLRVQGERPAVRTSDN</sequence>
<comment type="function">
    <text evidence="1">Catalyzes the conversion of dethiobiotin (DTB) to biotin by the insertion of a sulfur atom into dethiobiotin via a radical-based mechanism.</text>
</comment>
<comment type="catalytic activity">
    <reaction evidence="1">
        <text>(4R,5S)-dethiobiotin + (sulfur carrier)-SH + 2 reduced [2Fe-2S]-[ferredoxin] + 2 S-adenosyl-L-methionine = (sulfur carrier)-H + biotin + 2 5'-deoxyadenosine + 2 L-methionine + 2 oxidized [2Fe-2S]-[ferredoxin]</text>
        <dbReference type="Rhea" id="RHEA:22060"/>
        <dbReference type="Rhea" id="RHEA-COMP:10000"/>
        <dbReference type="Rhea" id="RHEA-COMP:10001"/>
        <dbReference type="Rhea" id="RHEA-COMP:14737"/>
        <dbReference type="Rhea" id="RHEA-COMP:14739"/>
        <dbReference type="ChEBI" id="CHEBI:17319"/>
        <dbReference type="ChEBI" id="CHEBI:29917"/>
        <dbReference type="ChEBI" id="CHEBI:33737"/>
        <dbReference type="ChEBI" id="CHEBI:33738"/>
        <dbReference type="ChEBI" id="CHEBI:57586"/>
        <dbReference type="ChEBI" id="CHEBI:57844"/>
        <dbReference type="ChEBI" id="CHEBI:59789"/>
        <dbReference type="ChEBI" id="CHEBI:64428"/>
        <dbReference type="ChEBI" id="CHEBI:149473"/>
        <dbReference type="EC" id="2.8.1.6"/>
    </reaction>
</comment>
<comment type="cofactor">
    <cofactor evidence="1">
        <name>[4Fe-4S] cluster</name>
        <dbReference type="ChEBI" id="CHEBI:49883"/>
    </cofactor>
    <text evidence="1">Binds 1 [4Fe-4S] cluster. The cluster is coordinated with 3 cysteines and an exchangeable S-adenosyl-L-methionine.</text>
</comment>
<comment type="cofactor">
    <cofactor evidence="1">
        <name>[2Fe-2S] cluster</name>
        <dbReference type="ChEBI" id="CHEBI:190135"/>
    </cofactor>
    <text evidence="1">Binds 1 [2Fe-2S] cluster. The cluster is coordinated with 3 cysteines and 1 arginine.</text>
</comment>
<comment type="pathway">
    <text evidence="1">Cofactor biosynthesis; biotin biosynthesis; biotin from 7,8-diaminononanoate: step 2/2.</text>
</comment>
<comment type="subunit">
    <text evidence="1">Homodimer.</text>
</comment>
<comment type="similarity">
    <text evidence="1">Belongs to the radical SAM superfamily. Biotin synthase family.</text>
</comment>
<organism>
    <name type="scientific">Leptothrix cholodnii (strain ATCC 51168 / LMG 8142 / SP-6)</name>
    <name type="common">Leptothrix discophora (strain SP-6)</name>
    <dbReference type="NCBI Taxonomy" id="395495"/>
    <lineage>
        <taxon>Bacteria</taxon>
        <taxon>Pseudomonadati</taxon>
        <taxon>Pseudomonadota</taxon>
        <taxon>Betaproteobacteria</taxon>
        <taxon>Burkholderiales</taxon>
        <taxon>Sphaerotilaceae</taxon>
        <taxon>Leptothrix</taxon>
    </lineage>
</organism>
<name>BIOB_LEPCP</name>
<evidence type="ECO:0000255" key="1">
    <source>
        <dbReference type="HAMAP-Rule" id="MF_01694"/>
    </source>
</evidence>
<evidence type="ECO:0000255" key="2">
    <source>
        <dbReference type="PROSITE-ProRule" id="PRU01266"/>
    </source>
</evidence>
<proteinExistence type="inferred from homology"/>
<gene>
    <name evidence="1" type="primary">bioB</name>
    <name type="ordered locus">Lcho_3644</name>
</gene>
<reference key="1">
    <citation type="submission" date="2008-03" db="EMBL/GenBank/DDBJ databases">
        <title>Complete sequence of Leptothrix cholodnii SP-6.</title>
        <authorList>
            <consortium name="US DOE Joint Genome Institute"/>
            <person name="Copeland A."/>
            <person name="Lucas S."/>
            <person name="Lapidus A."/>
            <person name="Glavina del Rio T."/>
            <person name="Dalin E."/>
            <person name="Tice H."/>
            <person name="Bruce D."/>
            <person name="Goodwin L."/>
            <person name="Pitluck S."/>
            <person name="Chertkov O."/>
            <person name="Brettin T."/>
            <person name="Detter J.C."/>
            <person name="Han C."/>
            <person name="Kuske C.R."/>
            <person name="Schmutz J."/>
            <person name="Larimer F."/>
            <person name="Land M."/>
            <person name="Hauser L."/>
            <person name="Kyrpides N."/>
            <person name="Lykidis A."/>
            <person name="Emerson D."/>
            <person name="Richardson P."/>
        </authorList>
    </citation>
    <scope>NUCLEOTIDE SEQUENCE [LARGE SCALE GENOMIC DNA]</scope>
    <source>
        <strain>ATCC 51168 / LMG 8142 / SP-6</strain>
    </source>
</reference>